<organism>
    <name type="scientific">Marinobacter nauticus (strain ATCC 700491 / DSM 11845 / VT8)</name>
    <name type="common">Marinobacter aquaeolei</name>
    <dbReference type="NCBI Taxonomy" id="351348"/>
    <lineage>
        <taxon>Bacteria</taxon>
        <taxon>Pseudomonadati</taxon>
        <taxon>Pseudomonadota</taxon>
        <taxon>Gammaproteobacteria</taxon>
        <taxon>Pseudomonadales</taxon>
        <taxon>Marinobacteraceae</taxon>
        <taxon>Marinobacter</taxon>
    </lineage>
</organism>
<sequence length="525" mass="58111">MAQNIHDHRILILDFGSQYTQLIARRVREIGVYCEIKAFDITDDELNEFNPKGIILAGGPESVTQLGGPRAPEGLFDRGIPVLGICYGMQTMAEQLGGRVASSEKREFGYAQVKVRAKGPLLADITDHLTPAGDSLLDVWMSHGDKVVAMPEGFELLASTESAPIAAMQDLSRNLYGVQFHPEVTHTLQGKRILEHFVLTISGCEALWTPAKIVDDAVRQIREQVGSDKVLLGLSGGVDSSVTAALLHKAIGDQLTCVFVDNGLLRLHEGDQVMDMFASNMGVKVIRVDAEDLFLSKLKGVNDPEQKRKIIGNTFIDVFDDEAANIKDVNWLAQGTIYPDVIESAASKTGKAHVIKSHHNVGGLPETMKMKLVEPLRELFKDEVRKIGLELGLPYDMVYRHPFPGPGLGVRILGEVKKEYADILRRADAIFLEELHRADLYHKTSQAFAVFLPVKSVGVVGDARRYEYVIAIRAVETVDFMTARWARLPYELLETVSNRIINEISGVSRVTYDISSKPPATIEWE</sequence>
<proteinExistence type="inferred from homology"/>
<reference key="1">
    <citation type="journal article" date="2011" name="Appl. Environ. Microbiol.">
        <title>Genomic potential of Marinobacter aquaeolei, a biogeochemical 'opportunitroph'.</title>
        <authorList>
            <person name="Singer E."/>
            <person name="Webb E.A."/>
            <person name="Nelson W.C."/>
            <person name="Heidelberg J.F."/>
            <person name="Ivanova N."/>
            <person name="Pati A."/>
            <person name="Edwards K.J."/>
        </authorList>
    </citation>
    <scope>NUCLEOTIDE SEQUENCE [LARGE SCALE GENOMIC DNA]</scope>
    <source>
        <strain>ATCC 700491 / DSM 11845 / VT8</strain>
    </source>
</reference>
<comment type="function">
    <text evidence="1">Catalyzes the synthesis of GMP from XMP.</text>
</comment>
<comment type="catalytic activity">
    <reaction evidence="1">
        <text>XMP + L-glutamine + ATP + H2O = GMP + L-glutamate + AMP + diphosphate + 2 H(+)</text>
        <dbReference type="Rhea" id="RHEA:11680"/>
        <dbReference type="ChEBI" id="CHEBI:15377"/>
        <dbReference type="ChEBI" id="CHEBI:15378"/>
        <dbReference type="ChEBI" id="CHEBI:29985"/>
        <dbReference type="ChEBI" id="CHEBI:30616"/>
        <dbReference type="ChEBI" id="CHEBI:33019"/>
        <dbReference type="ChEBI" id="CHEBI:57464"/>
        <dbReference type="ChEBI" id="CHEBI:58115"/>
        <dbReference type="ChEBI" id="CHEBI:58359"/>
        <dbReference type="ChEBI" id="CHEBI:456215"/>
        <dbReference type="EC" id="6.3.5.2"/>
    </reaction>
</comment>
<comment type="pathway">
    <text evidence="1">Purine metabolism; GMP biosynthesis; GMP from XMP (L-Gln route): step 1/1.</text>
</comment>
<comment type="subunit">
    <text evidence="1">Homodimer.</text>
</comment>
<keyword id="KW-0067">ATP-binding</keyword>
<keyword id="KW-0315">Glutamine amidotransferase</keyword>
<keyword id="KW-0332">GMP biosynthesis</keyword>
<keyword id="KW-0436">Ligase</keyword>
<keyword id="KW-0547">Nucleotide-binding</keyword>
<keyword id="KW-0658">Purine biosynthesis</keyword>
<gene>
    <name evidence="1" type="primary">guaA</name>
    <name type="ordered locus">Maqu_1727</name>
</gene>
<dbReference type="EC" id="6.3.5.2" evidence="1"/>
<dbReference type="EMBL" id="CP000514">
    <property type="protein sequence ID" value="ABM18811.1"/>
    <property type="molecule type" value="Genomic_DNA"/>
</dbReference>
<dbReference type="RefSeq" id="WP_011785210.1">
    <property type="nucleotide sequence ID" value="NC_008740.1"/>
</dbReference>
<dbReference type="SMR" id="A1U1E2"/>
<dbReference type="STRING" id="351348.Maqu_1727"/>
<dbReference type="MEROPS" id="C26.957"/>
<dbReference type="KEGG" id="maq:Maqu_1727"/>
<dbReference type="eggNOG" id="COG0518">
    <property type="taxonomic scope" value="Bacteria"/>
</dbReference>
<dbReference type="eggNOG" id="COG0519">
    <property type="taxonomic scope" value="Bacteria"/>
</dbReference>
<dbReference type="HOGENOM" id="CLU_014340_0_5_6"/>
<dbReference type="OrthoDB" id="9802219at2"/>
<dbReference type="UniPathway" id="UPA00189">
    <property type="reaction ID" value="UER00296"/>
</dbReference>
<dbReference type="Proteomes" id="UP000000998">
    <property type="component" value="Chromosome"/>
</dbReference>
<dbReference type="GO" id="GO:0005829">
    <property type="term" value="C:cytosol"/>
    <property type="evidence" value="ECO:0007669"/>
    <property type="project" value="TreeGrafter"/>
</dbReference>
<dbReference type="GO" id="GO:0005524">
    <property type="term" value="F:ATP binding"/>
    <property type="evidence" value="ECO:0007669"/>
    <property type="project" value="UniProtKB-UniRule"/>
</dbReference>
<dbReference type="GO" id="GO:0003921">
    <property type="term" value="F:GMP synthase activity"/>
    <property type="evidence" value="ECO:0007669"/>
    <property type="project" value="InterPro"/>
</dbReference>
<dbReference type="CDD" id="cd01742">
    <property type="entry name" value="GATase1_GMP_Synthase"/>
    <property type="match status" value="1"/>
</dbReference>
<dbReference type="CDD" id="cd01997">
    <property type="entry name" value="GMP_synthase_C"/>
    <property type="match status" value="1"/>
</dbReference>
<dbReference type="FunFam" id="3.30.300.10:FF:000002">
    <property type="entry name" value="GMP synthase [glutamine-hydrolyzing]"/>
    <property type="match status" value="1"/>
</dbReference>
<dbReference type="FunFam" id="3.40.50.620:FF:000001">
    <property type="entry name" value="GMP synthase [glutamine-hydrolyzing]"/>
    <property type="match status" value="1"/>
</dbReference>
<dbReference type="FunFam" id="3.40.50.880:FF:000001">
    <property type="entry name" value="GMP synthase [glutamine-hydrolyzing]"/>
    <property type="match status" value="1"/>
</dbReference>
<dbReference type="Gene3D" id="3.30.300.10">
    <property type="match status" value="1"/>
</dbReference>
<dbReference type="Gene3D" id="3.40.50.880">
    <property type="match status" value="1"/>
</dbReference>
<dbReference type="Gene3D" id="3.40.50.620">
    <property type="entry name" value="HUPs"/>
    <property type="match status" value="1"/>
</dbReference>
<dbReference type="HAMAP" id="MF_00344">
    <property type="entry name" value="GMP_synthase"/>
    <property type="match status" value="1"/>
</dbReference>
<dbReference type="InterPro" id="IPR029062">
    <property type="entry name" value="Class_I_gatase-like"/>
</dbReference>
<dbReference type="InterPro" id="IPR017926">
    <property type="entry name" value="GATASE"/>
</dbReference>
<dbReference type="InterPro" id="IPR001674">
    <property type="entry name" value="GMP_synth_C"/>
</dbReference>
<dbReference type="InterPro" id="IPR004739">
    <property type="entry name" value="GMP_synth_GATase"/>
</dbReference>
<dbReference type="InterPro" id="IPR022955">
    <property type="entry name" value="GMP_synthase"/>
</dbReference>
<dbReference type="InterPro" id="IPR025777">
    <property type="entry name" value="GMPS_ATP_PPase_dom"/>
</dbReference>
<dbReference type="InterPro" id="IPR022310">
    <property type="entry name" value="NAD/GMP_synthase"/>
</dbReference>
<dbReference type="InterPro" id="IPR014729">
    <property type="entry name" value="Rossmann-like_a/b/a_fold"/>
</dbReference>
<dbReference type="NCBIfam" id="TIGR00884">
    <property type="entry name" value="guaA_Cterm"/>
    <property type="match status" value="1"/>
</dbReference>
<dbReference type="NCBIfam" id="TIGR00888">
    <property type="entry name" value="guaA_Nterm"/>
    <property type="match status" value="1"/>
</dbReference>
<dbReference type="NCBIfam" id="NF000848">
    <property type="entry name" value="PRK00074.1"/>
    <property type="match status" value="1"/>
</dbReference>
<dbReference type="PANTHER" id="PTHR11922:SF2">
    <property type="entry name" value="GMP SYNTHASE [GLUTAMINE-HYDROLYZING]"/>
    <property type="match status" value="1"/>
</dbReference>
<dbReference type="PANTHER" id="PTHR11922">
    <property type="entry name" value="GMP SYNTHASE-RELATED"/>
    <property type="match status" value="1"/>
</dbReference>
<dbReference type="Pfam" id="PF00117">
    <property type="entry name" value="GATase"/>
    <property type="match status" value="1"/>
</dbReference>
<dbReference type="Pfam" id="PF00958">
    <property type="entry name" value="GMP_synt_C"/>
    <property type="match status" value="1"/>
</dbReference>
<dbReference type="Pfam" id="PF02540">
    <property type="entry name" value="NAD_synthase"/>
    <property type="match status" value="1"/>
</dbReference>
<dbReference type="PRINTS" id="PR00097">
    <property type="entry name" value="ANTSNTHASEII"/>
</dbReference>
<dbReference type="PRINTS" id="PR00096">
    <property type="entry name" value="GATASE"/>
</dbReference>
<dbReference type="SUPFAM" id="SSF52402">
    <property type="entry name" value="Adenine nucleotide alpha hydrolases-like"/>
    <property type="match status" value="1"/>
</dbReference>
<dbReference type="SUPFAM" id="SSF52317">
    <property type="entry name" value="Class I glutamine amidotransferase-like"/>
    <property type="match status" value="1"/>
</dbReference>
<dbReference type="SUPFAM" id="SSF54810">
    <property type="entry name" value="GMP synthetase C-terminal dimerisation domain"/>
    <property type="match status" value="1"/>
</dbReference>
<dbReference type="PROSITE" id="PS51273">
    <property type="entry name" value="GATASE_TYPE_1"/>
    <property type="match status" value="1"/>
</dbReference>
<dbReference type="PROSITE" id="PS51553">
    <property type="entry name" value="GMPS_ATP_PPASE"/>
    <property type="match status" value="1"/>
</dbReference>
<accession>A1U1E2</accession>
<feature type="chain" id="PRO_1000120333" description="GMP synthase [glutamine-hydrolyzing]">
    <location>
        <begin position="1"/>
        <end position="525"/>
    </location>
</feature>
<feature type="domain" description="Glutamine amidotransferase type-1" evidence="1">
    <location>
        <begin position="9"/>
        <end position="207"/>
    </location>
</feature>
<feature type="domain" description="GMPS ATP-PPase" evidence="1">
    <location>
        <begin position="208"/>
        <end position="400"/>
    </location>
</feature>
<feature type="active site" description="Nucleophile" evidence="1">
    <location>
        <position position="86"/>
    </location>
</feature>
<feature type="active site" evidence="1">
    <location>
        <position position="181"/>
    </location>
</feature>
<feature type="active site" evidence="1">
    <location>
        <position position="183"/>
    </location>
</feature>
<feature type="binding site" evidence="1">
    <location>
        <begin position="235"/>
        <end position="241"/>
    </location>
    <ligand>
        <name>ATP</name>
        <dbReference type="ChEBI" id="CHEBI:30616"/>
    </ligand>
</feature>
<protein>
    <recommendedName>
        <fullName evidence="1">GMP synthase [glutamine-hydrolyzing]</fullName>
        <ecNumber evidence="1">6.3.5.2</ecNumber>
    </recommendedName>
    <alternativeName>
        <fullName evidence="1">GMP synthetase</fullName>
    </alternativeName>
    <alternativeName>
        <fullName evidence="1">Glutamine amidotransferase</fullName>
    </alternativeName>
</protein>
<name>GUAA_MARN8</name>
<evidence type="ECO:0000255" key="1">
    <source>
        <dbReference type="HAMAP-Rule" id="MF_00344"/>
    </source>
</evidence>